<accession>A4W6R7</accession>
<dbReference type="EMBL" id="CP000653">
    <property type="protein sequence ID" value="ABP59397.1"/>
    <property type="molecule type" value="Genomic_DNA"/>
</dbReference>
<dbReference type="RefSeq" id="WP_012016118.1">
    <property type="nucleotide sequence ID" value="NC_009436.1"/>
</dbReference>
<dbReference type="SMR" id="A4W6R7"/>
<dbReference type="STRING" id="399742.Ent638_0710"/>
<dbReference type="GeneID" id="93307884"/>
<dbReference type="KEGG" id="ent:Ent638_0710"/>
<dbReference type="eggNOG" id="COG0233">
    <property type="taxonomic scope" value="Bacteria"/>
</dbReference>
<dbReference type="HOGENOM" id="CLU_073981_2_1_6"/>
<dbReference type="OrthoDB" id="9804006at2"/>
<dbReference type="Proteomes" id="UP000000230">
    <property type="component" value="Chromosome"/>
</dbReference>
<dbReference type="GO" id="GO:0005829">
    <property type="term" value="C:cytosol"/>
    <property type="evidence" value="ECO:0007669"/>
    <property type="project" value="GOC"/>
</dbReference>
<dbReference type="GO" id="GO:0043023">
    <property type="term" value="F:ribosomal large subunit binding"/>
    <property type="evidence" value="ECO:0007669"/>
    <property type="project" value="TreeGrafter"/>
</dbReference>
<dbReference type="GO" id="GO:0002184">
    <property type="term" value="P:cytoplasmic translational termination"/>
    <property type="evidence" value="ECO:0007669"/>
    <property type="project" value="TreeGrafter"/>
</dbReference>
<dbReference type="CDD" id="cd00520">
    <property type="entry name" value="RRF"/>
    <property type="match status" value="1"/>
</dbReference>
<dbReference type="FunFam" id="1.10.132.20:FF:000001">
    <property type="entry name" value="Ribosome-recycling factor"/>
    <property type="match status" value="1"/>
</dbReference>
<dbReference type="FunFam" id="3.30.1360.40:FF:000001">
    <property type="entry name" value="Ribosome-recycling factor"/>
    <property type="match status" value="1"/>
</dbReference>
<dbReference type="Gene3D" id="3.30.1360.40">
    <property type="match status" value="1"/>
</dbReference>
<dbReference type="Gene3D" id="1.10.132.20">
    <property type="entry name" value="Ribosome-recycling factor"/>
    <property type="match status" value="1"/>
</dbReference>
<dbReference type="HAMAP" id="MF_00040">
    <property type="entry name" value="RRF"/>
    <property type="match status" value="1"/>
</dbReference>
<dbReference type="InterPro" id="IPR002661">
    <property type="entry name" value="Ribosome_recyc_fac"/>
</dbReference>
<dbReference type="InterPro" id="IPR023584">
    <property type="entry name" value="Ribosome_recyc_fac_dom"/>
</dbReference>
<dbReference type="InterPro" id="IPR036191">
    <property type="entry name" value="RRF_sf"/>
</dbReference>
<dbReference type="NCBIfam" id="TIGR00496">
    <property type="entry name" value="frr"/>
    <property type="match status" value="1"/>
</dbReference>
<dbReference type="PANTHER" id="PTHR20982:SF3">
    <property type="entry name" value="MITOCHONDRIAL RIBOSOME RECYCLING FACTOR PSEUDO 1"/>
    <property type="match status" value="1"/>
</dbReference>
<dbReference type="PANTHER" id="PTHR20982">
    <property type="entry name" value="RIBOSOME RECYCLING FACTOR"/>
    <property type="match status" value="1"/>
</dbReference>
<dbReference type="Pfam" id="PF01765">
    <property type="entry name" value="RRF"/>
    <property type="match status" value="1"/>
</dbReference>
<dbReference type="SUPFAM" id="SSF55194">
    <property type="entry name" value="Ribosome recycling factor, RRF"/>
    <property type="match status" value="1"/>
</dbReference>
<gene>
    <name evidence="1" type="primary">frr</name>
    <name type="ordered locus">Ent638_0710</name>
</gene>
<reference key="1">
    <citation type="journal article" date="2010" name="PLoS Genet.">
        <title>Genome sequence of the plant growth promoting endophytic bacterium Enterobacter sp. 638.</title>
        <authorList>
            <person name="Taghavi S."/>
            <person name="van der Lelie D."/>
            <person name="Hoffman A."/>
            <person name="Zhang Y.B."/>
            <person name="Walla M.D."/>
            <person name="Vangronsveld J."/>
            <person name="Newman L."/>
            <person name="Monchy S."/>
        </authorList>
    </citation>
    <scope>NUCLEOTIDE SEQUENCE [LARGE SCALE GENOMIC DNA]</scope>
    <source>
        <strain>638</strain>
    </source>
</reference>
<keyword id="KW-0963">Cytoplasm</keyword>
<keyword id="KW-0648">Protein biosynthesis</keyword>
<comment type="function">
    <text evidence="1">Responsible for the release of ribosomes from messenger RNA at the termination of protein biosynthesis. May increase the efficiency of translation by recycling ribosomes from one round of translation to another.</text>
</comment>
<comment type="subcellular location">
    <subcellularLocation>
        <location evidence="1">Cytoplasm</location>
    </subcellularLocation>
</comment>
<comment type="similarity">
    <text evidence="1">Belongs to the RRF family.</text>
</comment>
<organism>
    <name type="scientific">Enterobacter sp. (strain 638)</name>
    <dbReference type="NCBI Taxonomy" id="399742"/>
    <lineage>
        <taxon>Bacteria</taxon>
        <taxon>Pseudomonadati</taxon>
        <taxon>Pseudomonadota</taxon>
        <taxon>Gammaproteobacteria</taxon>
        <taxon>Enterobacterales</taxon>
        <taxon>Enterobacteriaceae</taxon>
        <taxon>Enterobacter</taxon>
    </lineage>
</organism>
<name>RRF_ENT38</name>
<evidence type="ECO:0000255" key="1">
    <source>
        <dbReference type="HAMAP-Rule" id="MF_00040"/>
    </source>
</evidence>
<proteinExistence type="inferred from homology"/>
<feature type="chain" id="PRO_1000057292" description="Ribosome-recycling factor">
    <location>
        <begin position="1"/>
        <end position="185"/>
    </location>
</feature>
<protein>
    <recommendedName>
        <fullName evidence="1">Ribosome-recycling factor</fullName>
        <shortName evidence="1">RRF</shortName>
    </recommendedName>
    <alternativeName>
        <fullName evidence="1">Ribosome-releasing factor</fullName>
    </alternativeName>
</protein>
<sequence>MISDIRKDAEVRMEKCVEAFKNQISKVRTGRASPSLLDGIIVEYYGTPTPLRQLASVTVEDTRTLKINVFDRSLGPAVEKAIMASDLGLNPSSAGTDIRVPLPALTEERRKELIKVVRGEAEGARVAVRNVRRDANDKVKALLKDKEISEDDDRRSQDDVQKLTDAAIKKLDAALADKEAELMQF</sequence>